<keyword id="KW-0067">ATP-binding</keyword>
<keyword id="KW-0143">Chaperone</keyword>
<keyword id="KW-0963">Cytoplasm</keyword>
<keyword id="KW-0413">Isomerase</keyword>
<keyword id="KW-0547">Nucleotide-binding</keyword>
<keyword id="KW-1185">Reference proteome</keyword>
<accession>B3ER92</accession>
<organism>
    <name type="scientific">Amoebophilus asiaticus (strain 5a2)</name>
    <dbReference type="NCBI Taxonomy" id="452471"/>
    <lineage>
        <taxon>Bacteria</taxon>
        <taxon>Pseudomonadati</taxon>
        <taxon>Bacteroidota</taxon>
        <taxon>Cytophagia</taxon>
        <taxon>Cytophagales</taxon>
        <taxon>Amoebophilaceae</taxon>
        <taxon>Candidatus Amoebophilus</taxon>
    </lineage>
</organism>
<protein>
    <recommendedName>
        <fullName evidence="1">Chaperonin GroEL</fullName>
        <ecNumber evidence="1">5.6.1.7</ecNumber>
    </recommendedName>
    <alternativeName>
        <fullName evidence="1">60 kDa chaperonin</fullName>
    </alternativeName>
    <alternativeName>
        <fullName evidence="1">Chaperonin-60</fullName>
        <shortName evidence="1">Cpn60</shortName>
    </alternativeName>
</protein>
<sequence>MAKHIIFDSEARAKLKSGVDTMANAVKVTLGPKGRNVVIDKKYGAPSITKDGISVAKEIELKDPVENLGAQLIKEVASKTADGAGDGTTTATVLAQSIFSAGIKNVAAGANPMDLKRGVDKAIEAVVERLKQNSRKISNSKEIEQVATISANNDSKIGKMIADAMDKVGKDGVITVEEAKGTETEVKVVEGMEFDRGYLSPYFVTNTEKMEAELGNAYILICDKKISVMKELLPILEAISQTGRPLLIIAEDIEGEALATLVVNKIRGALKVAAVKAPGFGDRRKAMLEDIAILTGGTVISEERGYKLENATLDYLGTAEKINIDKENTLIVNGGGKKEDIQARISQIRSQIENTTSDYDKEKLQERLAKLSGGVAILYIGAATEVEMKEKKDRVDDALHATRAAVQEGVVAGGGVALIRTIPALENIEVENEDQATGINIVRTSLEAPLRTIVSNAGGEGAVIVQKIREAQGDFGYNARTGNFENLYEAGVIDPTKVTRLALENAASIASLLLTTECVIADEKEEDKPGVGAPGMGGGMGGMM</sequence>
<proteinExistence type="inferred from homology"/>
<reference key="1">
    <citation type="journal article" date="2010" name="J. Bacteriol.">
        <title>The genome of the amoeba symbiont 'Candidatus Amoebophilus asiaticus' reveals common mechanisms for host cell interaction among amoeba-associated bacteria.</title>
        <authorList>
            <person name="Schmitz-Esser S."/>
            <person name="Tischler P."/>
            <person name="Arnold R."/>
            <person name="Montanaro J."/>
            <person name="Wagner M."/>
            <person name="Rattei T."/>
            <person name="Horn M."/>
        </authorList>
    </citation>
    <scope>NUCLEOTIDE SEQUENCE [LARGE SCALE GENOMIC DNA]</scope>
    <source>
        <strain>5a2</strain>
    </source>
</reference>
<gene>
    <name evidence="1" type="primary">groEL</name>
    <name evidence="1" type="synonym">groL</name>
    <name type="ordered locus">Aasi_0308</name>
</gene>
<evidence type="ECO:0000255" key="1">
    <source>
        <dbReference type="HAMAP-Rule" id="MF_00600"/>
    </source>
</evidence>
<comment type="function">
    <text evidence="1">Together with its co-chaperonin GroES, plays an essential role in assisting protein folding. The GroEL-GroES system forms a nano-cage that allows encapsulation of the non-native substrate proteins and provides a physical environment optimized to promote and accelerate protein folding.</text>
</comment>
<comment type="catalytic activity">
    <reaction evidence="1">
        <text>ATP + H2O + a folded polypeptide = ADP + phosphate + an unfolded polypeptide.</text>
        <dbReference type="EC" id="5.6.1.7"/>
    </reaction>
</comment>
<comment type="subunit">
    <text evidence="1">Forms a cylinder of 14 subunits composed of two heptameric rings stacked back-to-back. Interacts with the co-chaperonin GroES.</text>
</comment>
<comment type="subcellular location">
    <subcellularLocation>
        <location evidence="1">Cytoplasm</location>
    </subcellularLocation>
</comment>
<comment type="similarity">
    <text evidence="1">Belongs to the chaperonin (HSP60) family.</text>
</comment>
<dbReference type="EC" id="5.6.1.7" evidence="1"/>
<dbReference type="EMBL" id="CP001102">
    <property type="protein sequence ID" value="ACE05744.1"/>
    <property type="molecule type" value="Genomic_DNA"/>
</dbReference>
<dbReference type="RefSeq" id="WP_012472508.1">
    <property type="nucleotide sequence ID" value="NC_010830.1"/>
</dbReference>
<dbReference type="SMR" id="B3ER92"/>
<dbReference type="STRING" id="452471.Aasi_0308"/>
<dbReference type="KEGG" id="aas:Aasi_0308"/>
<dbReference type="eggNOG" id="COG0459">
    <property type="taxonomic scope" value="Bacteria"/>
</dbReference>
<dbReference type="HOGENOM" id="CLU_016503_3_0_10"/>
<dbReference type="OrthoDB" id="9766614at2"/>
<dbReference type="Proteomes" id="UP000001227">
    <property type="component" value="Chromosome"/>
</dbReference>
<dbReference type="GO" id="GO:0005737">
    <property type="term" value="C:cytoplasm"/>
    <property type="evidence" value="ECO:0007669"/>
    <property type="project" value="UniProtKB-SubCell"/>
</dbReference>
<dbReference type="GO" id="GO:0005524">
    <property type="term" value="F:ATP binding"/>
    <property type="evidence" value="ECO:0007669"/>
    <property type="project" value="UniProtKB-UniRule"/>
</dbReference>
<dbReference type="GO" id="GO:0140662">
    <property type="term" value="F:ATP-dependent protein folding chaperone"/>
    <property type="evidence" value="ECO:0007669"/>
    <property type="project" value="InterPro"/>
</dbReference>
<dbReference type="GO" id="GO:0016853">
    <property type="term" value="F:isomerase activity"/>
    <property type="evidence" value="ECO:0007669"/>
    <property type="project" value="UniProtKB-KW"/>
</dbReference>
<dbReference type="GO" id="GO:0051082">
    <property type="term" value="F:unfolded protein binding"/>
    <property type="evidence" value="ECO:0007669"/>
    <property type="project" value="UniProtKB-UniRule"/>
</dbReference>
<dbReference type="GO" id="GO:0042026">
    <property type="term" value="P:protein refolding"/>
    <property type="evidence" value="ECO:0007669"/>
    <property type="project" value="UniProtKB-UniRule"/>
</dbReference>
<dbReference type="CDD" id="cd03344">
    <property type="entry name" value="GroEL"/>
    <property type="match status" value="1"/>
</dbReference>
<dbReference type="FunFam" id="3.50.7.10:FF:000001">
    <property type="entry name" value="60 kDa chaperonin"/>
    <property type="match status" value="1"/>
</dbReference>
<dbReference type="Gene3D" id="3.50.7.10">
    <property type="entry name" value="GroEL"/>
    <property type="match status" value="1"/>
</dbReference>
<dbReference type="Gene3D" id="1.10.560.10">
    <property type="entry name" value="GroEL-like equatorial domain"/>
    <property type="match status" value="1"/>
</dbReference>
<dbReference type="Gene3D" id="3.30.260.10">
    <property type="entry name" value="TCP-1-like chaperonin intermediate domain"/>
    <property type="match status" value="1"/>
</dbReference>
<dbReference type="HAMAP" id="MF_00600">
    <property type="entry name" value="CH60"/>
    <property type="match status" value="1"/>
</dbReference>
<dbReference type="InterPro" id="IPR018370">
    <property type="entry name" value="Chaperonin_Cpn60_CS"/>
</dbReference>
<dbReference type="InterPro" id="IPR001844">
    <property type="entry name" value="Cpn60/GroEL"/>
</dbReference>
<dbReference type="InterPro" id="IPR002423">
    <property type="entry name" value="Cpn60/GroEL/TCP-1"/>
</dbReference>
<dbReference type="InterPro" id="IPR027409">
    <property type="entry name" value="GroEL-like_apical_dom_sf"/>
</dbReference>
<dbReference type="InterPro" id="IPR027413">
    <property type="entry name" value="GROEL-like_equatorial_sf"/>
</dbReference>
<dbReference type="InterPro" id="IPR027410">
    <property type="entry name" value="TCP-1-like_intermed_sf"/>
</dbReference>
<dbReference type="NCBIfam" id="TIGR02348">
    <property type="entry name" value="GroEL"/>
    <property type="match status" value="1"/>
</dbReference>
<dbReference type="NCBIfam" id="NF000592">
    <property type="entry name" value="PRK00013.1"/>
    <property type="match status" value="1"/>
</dbReference>
<dbReference type="NCBIfam" id="NF009487">
    <property type="entry name" value="PRK12849.1"/>
    <property type="match status" value="1"/>
</dbReference>
<dbReference type="NCBIfam" id="NF009488">
    <property type="entry name" value="PRK12850.1"/>
    <property type="match status" value="1"/>
</dbReference>
<dbReference type="NCBIfam" id="NF009489">
    <property type="entry name" value="PRK12851.1"/>
    <property type="match status" value="1"/>
</dbReference>
<dbReference type="PANTHER" id="PTHR45633">
    <property type="entry name" value="60 KDA HEAT SHOCK PROTEIN, MITOCHONDRIAL"/>
    <property type="match status" value="1"/>
</dbReference>
<dbReference type="Pfam" id="PF00118">
    <property type="entry name" value="Cpn60_TCP1"/>
    <property type="match status" value="1"/>
</dbReference>
<dbReference type="PRINTS" id="PR00298">
    <property type="entry name" value="CHAPERONIN60"/>
</dbReference>
<dbReference type="SUPFAM" id="SSF52029">
    <property type="entry name" value="GroEL apical domain-like"/>
    <property type="match status" value="1"/>
</dbReference>
<dbReference type="SUPFAM" id="SSF48592">
    <property type="entry name" value="GroEL equatorial domain-like"/>
    <property type="match status" value="1"/>
</dbReference>
<dbReference type="SUPFAM" id="SSF54849">
    <property type="entry name" value="GroEL-intermediate domain like"/>
    <property type="match status" value="1"/>
</dbReference>
<dbReference type="PROSITE" id="PS00296">
    <property type="entry name" value="CHAPERONINS_CPN60"/>
    <property type="match status" value="1"/>
</dbReference>
<feature type="chain" id="PRO_1000129968" description="Chaperonin GroEL">
    <location>
        <begin position="1"/>
        <end position="544"/>
    </location>
</feature>
<feature type="binding site" evidence="1">
    <location>
        <begin position="29"/>
        <end position="32"/>
    </location>
    <ligand>
        <name>ATP</name>
        <dbReference type="ChEBI" id="CHEBI:30616"/>
    </ligand>
</feature>
<feature type="binding site" evidence="1">
    <location>
        <position position="50"/>
    </location>
    <ligand>
        <name>ATP</name>
        <dbReference type="ChEBI" id="CHEBI:30616"/>
    </ligand>
</feature>
<feature type="binding site" evidence="1">
    <location>
        <begin position="86"/>
        <end position="90"/>
    </location>
    <ligand>
        <name>ATP</name>
        <dbReference type="ChEBI" id="CHEBI:30616"/>
    </ligand>
</feature>
<feature type="binding site" evidence="1">
    <location>
        <position position="414"/>
    </location>
    <ligand>
        <name>ATP</name>
        <dbReference type="ChEBI" id="CHEBI:30616"/>
    </ligand>
</feature>
<feature type="binding site" evidence="1">
    <location>
        <position position="494"/>
    </location>
    <ligand>
        <name>ATP</name>
        <dbReference type="ChEBI" id="CHEBI:30616"/>
    </ligand>
</feature>
<name>CH60_AMOA5</name>